<dbReference type="EMBL" id="AK011522">
    <property type="protein sequence ID" value="BAB27676.1"/>
    <property type="molecule type" value="mRNA"/>
</dbReference>
<dbReference type="EMBL" id="AK042650">
    <property type="protein sequence ID" value="BAC31320.1"/>
    <property type="molecule type" value="mRNA"/>
</dbReference>
<dbReference type="EMBL" id="AK047006">
    <property type="protein sequence ID" value="BAC32940.1"/>
    <property type="molecule type" value="mRNA"/>
</dbReference>
<dbReference type="EMBL" id="BC046234">
    <property type="protein sequence ID" value="AAH46234.1"/>
    <property type="molecule type" value="mRNA"/>
</dbReference>
<dbReference type="EMBL" id="BC059048">
    <property type="protein sequence ID" value="AAH59048.1"/>
    <property type="molecule type" value="mRNA"/>
</dbReference>
<dbReference type="CCDS" id="CCDS35696.1"/>
<dbReference type="RefSeq" id="NP_082411.1">
    <property type="nucleotide sequence ID" value="NM_028135.2"/>
</dbReference>
<dbReference type="SMR" id="Q8C996"/>
<dbReference type="FunCoup" id="Q8C996">
    <property type="interactions" value="136"/>
</dbReference>
<dbReference type="IntAct" id="Q8C996">
    <property type="interactions" value="3"/>
</dbReference>
<dbReference type="MINT" id="Q8C996"/>
<dbReference type="GlyGen" id="Q8C996">
    <property type="glycosylation" value="1 site, 1 N-linked glycan (1 site)"/>
</dbReference>
<dbReference type="iPTMnet" id="Q8C996"/>
<dbReference type="PhosphoSitePlus" id="Q8C996"/>
<dbReference type="SwissPalm" id="Q8C996"/>
<dbReference type="PaxDb" id="10090-ENSMUSP00000140828"/>
<dbReference type="PeptideAtlas" id="Q8C996"/>
<dbReference type="ProteomicsDB" id="258904"/>
<dbReference type="Antibodypedia" id="33555">
    <property type="antibodies" value="39 antibodies from 13 providers"/>
</dbReference>
<dbReference type="DNASU" id="72160"/>
<dbReference type="Ensembl" id="ENSMUST00000027585.14">
    <property type="protein sequence ID" value="ENSMUSP00000027585.8"/>
    <property type="gene ID" value="ENSMUSG00000026347.14"/>
</dbReference>
<dbReference type="Ensembl" id="ENSMUST00000160616.8">
    <property type="protein sequence ID" value="ENSMUSP00000124307.2"/>
    <property type="gene ID" value="ENSMUSG00000026347.14"/>
</dbReference>
<dbReference type="Ensembl" id="ENSMUST00000185560.2">
    <property type="protein sequence ID" value="ENSMUSP00000140828.2"/>
    <property type="gene ID" value="ENSMUSG00000026347.14"/>
</dbReference>
<dbReference type="GeneID" id="72160"/>
<dbReference type="KEGG" id="mmu:72160"/>
<dbReference type="UCSC" id="uc011wqz.1">
    <property type="organism name" value="mouse"/>
</dbReference>
<dbReference type="AGR" id="MGI:1919410"/>
<dbReference type="CTD" id="81615"/>
<dbReference type="MGI" id="MGI:1919410">
    <property type="gene designation" value="Tmem163"/>
</dbReference>
<dbReference type="VEuPathDB" id="HostDB:ENSMUSG00000026347"/>
<dbReference type="eggNOG" id="ENOG502QW7B">
    <property type="taxonomic scope" value="Eukaryota"/>
</dbReference>
<dbReference type="GeneTree" id="ENSGT00390000001170"/>
<dbReference type="HOGENOM" id="CLU_081161_0_0_1"/>
<dbReference type="InParanoid" id="Q8C996"/>
<dbReference type="OMA" id="IMRYSAS"/>
<dbReference type="OrthoDB" id="5980560at2759"/>
<dbReference type="PhylomeDB" id="Q8C996"/>
<dbReference type="TreeFam" id="TF330782"/>
<dbReference type="BioGRID-ORCS" id="72160">
    <property type="hits" value="1 hit in 78 CRISPR screens"/>
</dbReference>
<dbReference type="CD-CODE" id="CE726F99">
    <property type="entry name" value="Postsynaptic density"/>
</dbReference>
<dbReference type="ChiTaRS" id="Tmem163">
    <property type="organism name" value="mouse"/>
</dbReference>
<dbReference type="PRO" id="PR:Q8C996"/>
<dbReference type="Proteomes" id="UP000000589">
    <property type="component" value="Chromosome 1"/>
</dbReference>
<dbReference type="RNAct" id="Q8C996">
    <property type="molecule type" value="protein"/>
</dbReference>
<dbReference type="Bgee" id="ENSMUSG00000026347">
    <property type="expression patterns" value="Expressed in cardiac atrium and 120 other cell types or tissues"/>
</dbReference>
<dbReference type="GO" id="GO:0031901">
    <property type="term" value="C:early endosome membrane"/>
    <property type="evidence" value="ECO:0000250"/>
    <property type="project" value="UniProtKB"/>
</dbReference>
<dbReference type="GO" id="GO:0097708">
    <property type="term" value="C:intracellular vesicle"/>
    <property type="evidence" value="ECO:0000269"/>
    <property type="project" value="MGI"/>
</dbReference>
<dbReference type="GO" id="GO:0031902">
    <property type="term" value="C:late endosome membrane"/>
    <property type="evidence" value="ECO:0007669"/>
    <property type="project" value="UniProtKB-SubCell"/>
</dbReference>
<dbReference type="GO" id="GO:0005765">
    <property type="term" value="C:lysosomal membrane"/>
    <property type="evidence" value="ECO:0007669"/>
    <property type="project" value="UniProtKB-SubCell"/>
</dbReference>
<dbReference type="GO" id="GO:0005886">
    <property type="term" value="C:plasma membrane"/>
    <property type="evidence" value="ECO:0000269"/>
    <property type="project" value="MGI"/>
</dbReference>
<dbReference type="GO" id="GO:0030672">
    <property type="term" value="C:synaptic vesicle membrane"/>
    <property type="evidence" value="ECO:0000314"/>
    <property type="project" value="UniProtKB"/>
</dbReference>
<dbReference type="GO" id="GO:0008270">
    <property type="term" value="F:zinc ion binding"/>
    <property type="evidence" value="ECO:0000250"/>
    <property type="project" value="UniProtKB"/>
</dbReference>
<dbReference type="GO" id="GO:0042552">
    <property type="term" value="P:myelination"/>
    <property type="evidence" value="ECO:0000250"/>
    <property type="project" value="UniProtKB"/>
</dbReference>
<dbReference type="GO" id="GO:0140882">
    <property type="term" value="P:zinc export across plasma membrane"/>
    <property type="evidence" value="ECO:0000250"/>
    <property type="project" value="UniProtKB"/>
</dbReference>
<dbReference type="GO" id="GO:0099180">
    <property type="term" value="P:zinc ion import into synaptic vesicle"/>
    <property type="evidence" value="ECO:0007669"/>
    <property type="project" value="Ensembl"/>
</dbReference>
<dbReference type="FunFam" id="1.20.1510.10:FF:000018">
    <property type="entry name" value="transmembrane protein 163"/>
    <property type="match status" value="1"/>
</dbReference>
<dbReference type="Gene3D" id="1.20.1510.10">
    <property type="entry name" value="Cation efflux protein transmembrane domain"/>
    <property type="match status" value="1"/>
</dbReference>
<dbReference type="InterPro" id="IPR027469">
    <property type="entry name" value="Cation_efflux_TMD_sf"/>
</dbReference>
<dbReference type="InterPro" id="IPR026765">
    <property type="entry name" value="Tmem163"/>
</dbReference>
<dbReference type="PANTHER" id="PTHR31937">
    <property type="entry name" value="TRANSMEMBRANE PROTEIN 163"/>
    <property type="match status" value="1"/>
</dbReference>
<dbReference type="PANTHER" id="PTHR31937:SF2">
    <property type="entry name" value="TRANSMEMBRANE PROTEIN 163"/>
    <property type="match status" value="1"/>
</dbReference>
<dbReference type="SUPFAM" id="SSF161111">
    <property type="entry name" value="Cation efflux protein transmembrane domain-like"/>
    <property type="match status" value="1"/>
</dbReference>
<evidence type="ECO:0000250" key="1">
    <source>
        <dbReference type="UniProtKB" id="A9CMA6"/>
    </source>
</evidence>
<evidence type="ECO:0000250" key="2">
    <source>
        <dbReference type="UniProtKB" id="B0UY98"/>
    </source>
</evidence>
<evidence type="ECO:0000250" key="3">
    <source>
        <dbReference type="UniProtKB" id="Q8TC26"/>
    </source>
</evidence>
<evidence type="ECO:0000255" key="4"/>
<evidence type="ECO:0000256" key="5">
    <source>
        <dbReference type="SAM" id="MobiDB-lite"/>
    </source>
</evidence>
<evidence type="ECO:0000269" key="6">
    <source>
    </source>
</evidence>
<evidence type="ECO:0000269" key="7">
    <source>
    </source>
</evidence>
<evidence type="ECO:0000269" key="8">
    <source>
    </source>
</evidence>
<evidence type="ECO:0000305" key="9"/>
<evidence type="ECO:0007744" key="10">
    <source>
    </source>
</evidence>
<gene>
    <name type="primary">Tmem163</name>
    <name type="synonym">Sv31</name>
</gene>
<reference key="1">
    <citation type="journal article" date="2005" name="Science">
        <title>The transcriptional landscape of the mammalian genome.</title>
        <authorList>
            <person name="Carninci P."/>
            <person name="Kasukawa T."/>
            <person name="Katayama S."/>
            <person name="Gough J."/>
            <person name="Frith M.C."/>
            <person name="Maeda N."/>
            <person name="Oyama R."/>
            <person name="Ravasi T."/>
            <person name="Lenhard B."/>
            <person name="Wells C."/>
            <person name="Kodzius R."/>
            <person name="Shimokawa K."/>
            <person name="Bajic V.B."/>
            <person name="Brenner S.E."/>
            <person name="Batalov S."/>
            <person name="Forrest A.R."/>
            <person name="Zavolan M."/>
            <person name="Davis M.J."/>
            <person name="Wilming L.G."/>
            <person name="Aidinis V."/>
            <person name="Allen J.E."/>
            <person name="Ambesi-Impiombato A."/>
            <person name="Apweiler R."/>
            <person name="Aturaliya R.N."/>
            <person name="Bailey T.L."/>
            <person name="Bansal M."/>
            <person name="Baxter L."/>
            <person name="Beisel K.W."/>
            <person name="Bersano T."/>
            <person name="Bono H."/>
            <person name="Chalk A.M."/>
            <person name="Chiu K.P."/>
            <person name="Choudhary V."/>
            <person name="Christoffels A."/>
            <person name="Clutterbuck D.R."/>
            <person name="Crowe M.L."/>
            <person name="Dalla E."/>
            <person name="Dalrymple B.P."/>
            <person name="de Bono B."/>
            <person name="Della Gatta G."/>
            <person name="di Bernardo D."/>
            <person name="Down T."/>
            <person name="Engstrom P."/>
            <person name="Fagiolini M."/>
            <person name="Faulkner G."/>
            <person name="Fletcher C.F."/>
            <person name="Fukushima T."/>
            <person name="Furuno M."/>
            <person name="Futaki S."/>
            <person name="Gariboldi M."/>
            <person name="Georgii-Hemming P."/>
            <person name="Gingeras T.R."/>
            <person name="Gojobori T."/>
            <person name="Green R.E."/>
            <person name="Gustincich S."/>
            <person name="Harbers M."/>
            <person name="Hayashi Y."/>
            <person name="Hensch T.K."/>
            <person name="Hirokawa N."/>
            <person name="Hill D."/>
            <person name="Huminiecki L."/>
            <person name="Iacono M."/>
            <person name="Ikeo K."/>
            <person name="Iwama A."/>
            <person name="Ishikawa T."/>
            <person name="Jakt M."/>
            <person name="Kanapin A."/>
            <person name="Katoh M."/>
            <person name="Kawasawa Y."/>
            <person name="Kelso J."/>
            <person name="Kitamura H."/>
            <person name="Kitano H."/>
            <person name="Kollias G."/>
            <person name="Krishnan S.P."/>
            <person name="Kruger A."/>
            <person name="Kummerfeld S.K."/>
            <person name="Kurochkin I.V."/>
            <person name="Lareau L.F."/>
            <person name="Lazarevic D."/>
            <person name="Lipovich L."/>
            <person name="Liu J."/>
            <person name="Liuni S."/>
            <person name="McWilliam S."/>
            <person name="Madan Babu M."/>
            <person name="Madera M."/>
            <person name="Marchionni L."/>
            <person name="Matsuda H."/>
            <person name="Matsuzawa S."/>
            <person name="Miki H."/>
            <person name="Mignone F."/>
            <person name="Miyake S."/>
            <person name="Morris K."/>
            <person name="Mottagui-Tabar S."/>
            <person name="Mulder N."/>
            <person name="Nakano N."/>
            <person name="Nakauchi H."/>
            <person name="Ng P."/>
            <person name="Nilsson R."/>
            <person name="Nishiguchi S."/>
            <person name="Nishikawa S."/>
            <person name="Nori F."/>
            <person name="Ohara O."/>
            <person name="Okazaki Y."/>
            <person name="Orlando V."/>
            <person name="Pang K.C."/>
            <person name="Pavan W.J."/>
            <person name="Pavesi G."/>
            <person name="Pesole G."/>
            <person name="Petrovsky N."/>
            <person name="Piazza S."/>
            <person name="Reed J."/>
            <person name="Reid J.F."/>
            <person name="Ring B.Z."/>
            <person name="Ringwald M."/>
            <person name="Rost B."/>
            <person name="Ruan Y."/>
            <person name="Salzberg S.L."/>
            <person name="Sandelin A."/>
            <person name="Schneider C."/>
            <person name="Schoenbach C."/>
            <person name="Sekiguchi K."/>
            <person name="Semple C.A."/>
            <person name="Seno S."/>
            <person name="Sessa L."/>
            <person name="Sheng Y."/>
            <person name="Shibata Y."/>
            <person name="Shimada H."/>
            <person name="Shimada K."/>
            <person name="Silva D."/>
            <person name="Sinclair B."/>
            <person name="Sperling S."/>
            <person name="Stupka E."/>
            <person name="Sugiura K."/>
            <person name="Sultana R."/>
            <person name="Takenaka Y."/>
            <person name="Taki K."/>
            <person name="Tammoja K."/>
            <person name="Tan S.L."/>
            <person name="Tang S."/>
            <person name="Taylor M.S."/>
            <person name="Tegner J."/>
            <person name="Teichmann S.A."/>
            <person name="Ueda H.R."/>
            <person name="van Nimwegen E."/>
            <person name="Verardo R."/>
            <person name="Wei C.L."/>
            <person name="Yagi K."/>
            <person name="Yamanishi H."/>
            <person name="Zabarovsky E."/>
            <person name="Zhu S."/>
            <person name="Zimmer A."/>
            <person name="Hide W."/>
            <person name="Bult C."/>
            <person name="Grimmond S.M."/>
            <person name="Teasdale R.D."/>
            <person name="Liu E.T."/>
            <person name="Brusic V."/>
            <person name="Quackenbush J."/>
            <person name="Wahlestedt C."/>
            <person name="Mattick J.S."/>
            <person name="Hume D.A."/>
            <person name="Kai C."/>
            <person name="Sasaki D."/>
            <person name="Tomaru Y."/>
            <person name="Fukuda S."/>
            <person name="Kanamori-Katayama M."/>
            <person name="Suzuki M."/>
            <person name="Aoki J."/>
            <person name="Arakawa T."/>
            <person name="Iida J."/>
            <person name="Imamura K."/>
            <person name="Itoh M."/>
            <person name="Kato T."/>
            <person name="Kawaji H."/>
            <person name="Kawagashira N."/>
            <person name="Kawashima T."/>
            <person name="Kojima M."/>
            <person name="Kondo S."/>
            <person name="Konno H."/>
            <person name="Nakano K."/>
            <person name="Ninomiya N."/>
            <person name="Nishio T."/>
            <person name="Okada M."/>
            <person name="Plessy C."/>
            <person name="Shibata K."/>
            <person name="Shiraki T."/>
            <person name="Suzuki S."/>
            <person name="Tagami M."/>
            <person name="Waki K."/>
            <person name="Watahiki A."/>
            <person name="Okamura-Oho Y."/>
            <person name="Suzuki H."/>
            <person name="Kawai J."/>
            <person name="Hayashizaki Y."/>
        </authorList>
    </citation>
    <scope>NUCLEOTIDE SEQUENCE [LARGE SCALE MRNA]</scope>
    <source>
        <strain>C57BL/6J</strain>
        <tissue>Cerebellum</tissue>
        <tissue>Embryo</tissue>
    </source>
</reference>
<reference key="2">
    <citation type="journal article" date="2004" name="Genome Res.">
        <title>The status, quality, and expansion of the NIH full-length cDNA project: the Mammalian Gene Collection (MGC).</title>
        <authorList>
            <consortium name="The MGC Project Team"/>
        </authorList>
    </citation>
    <scope>NUCLEOTIDE SEQUENCE [LARGE SCALE MRNA]</scope>
    <source>
        <strain>C57BL/6J</strain>
        <tissue>Brain</tissue>
    </source>
</reference>
<reference key="3">
    <citation type="journal article" date="2007" name="J. Neurochem.">
        <title>Identification and characterization of SV31, a novel synaptic vesicle membrane protein and potential transporter.</title>
        <authorList>
            <person name="Burre J."/>
            <person name="Zimmermann H."/>
            <person name="Volknandt W."/>
        </authorList>
    </citation>
    <scope>SUBCELLULAR LOCATION</scope>
    <scope>TOPOLOGY</scope>
    <scope>TISSUE SPECIFICITY</scope>
</reference>
<reference key="4">
    <citation type="journal article" date="2007" name="Mol. Cell. Proteomics">
        <title>Qualitative and quantitative analyses of protein phosphorylation in naive and stimulated mouse synaptosomal preparations.</title>
        <authorList>
            <person name="Munton R.P."/>
            <person name="Tweedie-Cullen R."/>
            <person name="Livingstone-Zatchej M."/>
            <person name="Weinandy F."/>
            <person name="Waidelich M."/>
            <person name="Longo D."/>
            <person name="Gehrig P."/>
            <person name="Potthast F."/>
            <person name="Rutishauser D."/>
            <person name="Gerrits B."/>
            <person name="Panse C."/>
            <person name="Schlapbach R."/>
            <person name="Mansuy I.M."/>
        </authorList>
    </citation>
    <scope>IDENTIFICATION BY MASS SPECTROMETRY [LARGE SCALE ANALYSIS]</scope>
    <source>
        <tissue>Brain cortex</tissue>
    </source>
</reference>
<reference key="5">
    <citation type="journal article" date="2010" name="Cell">
        <title>A tissue-specific atlas of mouse protein phosphorylation and expression.</title>
        <authorList>
            <person name="Huttlin E.L."/>
            <person name="Jedrychowski M.P."/>
            <person name="Elias J.E."/>
            <person name="Goswami T."/>
            <person name="Rad R."/>
            <person name="Beausoleil S.A."/>
            <person name="Villen J."/>
            <person name="Haas W."/>
            <person name="Sowa M.E."/>
            <person name="Gygi S.P."/>
        </authorList>
    </citation>
    <scope>PHOSPHORYLATION [LARGE SCALE ANALYSIS] AT SER-45; SER-54; SER-56 AND SER-60</scope>
    <scope>IDENTIFICATION BY MASS SPECTROMETRY [LARGE SCALE ANALYSIS]</scope>
    <source>
        <tissue>Brain</tissue>
        <tissue>Heart</tissue>
        <tissue>Lung</tissue>
    </source>
</reference>
<reference key="6">
    <citation type="journal article" date="2014" name="Traffic">
        <title>Cellular zinc levels are modulated by TRPML1-TMEM163 interaction.</title>
        <authorList>
            <person name="Cuajungco M.P."/>
            <person name="Basilio L.C."/>
            <person name="Silva J."/>
            <person name="Hart T."/>
            <person name="Tringali J."/>
            <person name="Chen C.C."/>
            <person name="Biel M."/>
            <person name="Grimm C."/>
        </authorList>
    </citation>
    <scope>INTERACTION WITH MCOLN1</scope>
</reference>
<reference key="7">
    <citation type="journal article" date="2019" name="Arch. Biochem. Biophys.">
        <title>Transmembrane 163 (TMEM163) protein effluxes zinc.</title>
        <authorList>
            <person name="Sanchez V.B."/>
            <person name="Ali S."/>
            <person name="Escobar A."/>
            <person name="Cuajungco M.P."/>
        </authorList>
    </citation>
    <scope>TISSUE SPECIFICITY</scope>
</reference>
<comment type="function">
    <text evidence="1 2 3">Zinc ion transporter that mediates zinc efflux and plays a crucial role in intracellular zinc homeostasis (By similarity). Binds the divalent cations Zn(2+), Ni(2+), and to a minor extent Cu(2+) (By similarity). Is a functional modulator of P2X purinoceptors, including P2RX1, P2RX3, P2RX4 and P2RX7 (By similarity). Plays a role in central nervous system development and is required for myelination, and survival and proliferation of oligodendrocytes (By similarity).</text>
</comment>
<comment type="catalytic activity">
    <reaction evidence="3">
        <text>Zn(2+)(in) = Zn(2+)(out)</text>
        <dbReference type="Rhea" id="RHEA:29351"/>
        <dbReference type="ChEBI" id="CHEBI:29105"/>
    </reaction>
    <physiologicalReaction direction="left-to-right" evidence="3">
        <dbReference type="Rhea" id="RHEA:29352"/>
    </physiologicalReaction>
</comment>
<comment type="subunit">
    <text evidence="3 7">Homodimer (By similarity). Interacts with MCOLN1 (PubMed:25130899). Interacts with SLC30A1, SLC30A2, SLC30A3 and SLC30A4 (By similarity).</text>
</comment>
<comment type="subcellular location">
    <subcellularLocation>
        <location evidence="6">Cytoplasmic vesicle</location>
        <location evidence="6">Secretory vesicle</location>
        <location evidence="6">Synaptic vesicle membrane</location>
        <topology evidence="4">Multi-pass membrane protein</topology>
    </subcellularLocation>
    <subcellularLocation>
        <location evidence="1">Early endosome membrane</location>
        <topology evidence="4">Multi-pass membrane protein</topology>
    </subcellularLocation>
    <subcellularLocation>
        <location evidence="3">Late endosome membrane</location>
        <topology evidence="4">Multi-pass membrane protein</topology>
    </subcellularLocation>
    <subcellularLocation>
        <location evidence="3">Lysosome membrane</location>
        <topology evidence="4">Multi-pass membrane protein</topology>
    </subcellularLocation>
    <subcellularLocation>
        <location evidence="3">Cell membrane</location>
        <topology evidence="4">Multi-pass membrane protein</topology>
    </subcellularLocation>
    <text evidence="1">Glutamatergic synaptic vesicles.</text>
</comment>
<comment type="tissue specificity">
    <text evidence="6 8">Widely expressed, with high expression in the brain, cerebellum, heart, lung and spleen (PubMed:31697912). In the brain, mainly expressed in the glutaminergic neuron subpopulations (PubMed:17623043).</text>
</comment>
<comment type="similarity">
    <text evidence="9">Belongs to the TMEM163 family.</text>
</comment>
<keyword id="KW-1003">Cell membrane</keyword>
<keyword id="KW-0968">Cytoplasmic vesicle</keyword>
<keyword id="KW-0967">Endosome</keyword>
<keyword id="KW-0458">Lysosome</keyword>
<keyword id="KW-0472">Membrane</keyword>
<keyword id="KW-0597">Phosphoprotein</keyword>
<keyword id="KW-1185">Reference proteome</keyword>
<keyword id="KW-0770">Synapse</keyword>
<keyword id="KW-0812">Transmembrane</keyword>
<keyword id="KW-1133">Transmembrane helix</keyword>
<keyword id="KW-0813">Transport</keyword>
<keyword id="KW-0862">Zinc</keyword>
<proteinExistence type="evidence at protein level"/>
<sequence length="288" mass="31193">MEPALGSERRSPPGPGVPRPPPRGHAPSTAAPAPSPAPMSSSVQSDEERQPRISESGQFSDGLEDRGLLESSTRLKPHEAQNYRKKALWVSWLSIIVTLALAVAAFTVSVMRYSASAFGFAFDAILDVLSSAIVLWRYSNAAAVHSANREYIACVILGVIFLLSSICIVVKAIHDLSTRLLPEVDDFLFSVSILSGILCSVLAVLKFMLGKVLTSRALITDGFNSLVGGVMGFSILLSAEVFKHNAAVWYLDGSIGVLIGLTIFAYGVKLLIDMVPRVRQTRHYEMFE</sequence>
<feature type="chain" id="PRO_0000278540" description="Transmembrane protein 163">
    <location>
        <begin position="1"/>
        <end position="288"/>
    </location>
</feature>
<feature type="topological domain" description="Cytoplasmic" evidence="4">
    <location>
        <begin position="1"/>
        <end position="87"/>
    </location>
</feature>
<feature type="transmembrane region" description="Helical" evidence="4">
    <location>
        <begin position="88"/>
        <end position="108"/>
    </location>
</feature>
<feature type="topological domain" description="Extracellular" evidence="4">
    <location>
        <begin position="109"/>
        <end position="115"/>
    </location>
</feature>
<feature type="transmembrane region" description="Helical" evidence="4">
    <location>
        <begin position="116"/>
        <end position="136"/>
    </location>
</feature>
<feature type="topological domain" description="Cytoplasmic" evidence="4">
    <location>
        <begin position="137"/>
        <end position="149"/>
    </location>
</feature>
<feature type="transmembrane region" description="Helical" evidence="4">
    <location>
        <begin position="150"/>
        <end position="170"/>
    </location>
</feature>
<feature type="topological domain" description="Extracellular" evidence="4">
    <location>
        <begin position="171"/>
        <end position="186"/>
    </location>
</feature>
<feature type="transmembrane region" description="Helical" evidence="4">
    <location>
        <begin position="187"/>
        <end position="207"/>
    </location>
</feature>
<feature type="topological domain" description="Cytoplasmic" evidence="4">
    <location>
        <begin position="208"/>
        <end position="216"/>
    </location>
</feature>
<feature type="transmembrane region" description="Helical" evidence="4">
    <location>
        <begin position="217"/>
        <end position="237"/>
    </location>
</feature>
<feature type="topological domain" description="Extracellular" evidence="4">
    <location>
        <begin position="238"/>
        <end position="254"/>
    </location>
</feature>
<feature type="transmembrane region" description="Helical" evidence="4">
    <location>
        <begin position="255"/>
        <end position="275"/>
    </location>
</feature>
<feature type="topological domain" description="Cytoplasmic" evidence="4">
    <location>
        <begin position="276"/>
        <end position="288"/>
    </location>
</feature>
<feature type="region of interest" description="Disordered" evidence="5">
    <location>
        <begin position="1"/>
        <end position="64"/>
    </location>
</feature>
<feature type="region of interest" description="Required for interaction with MCOLN1" evidence="3">
    <location>
        <begin position="41"/>
        <end position="71"/>
    </location>
</feature>
<feature type="compositionally biased region" description="Pro residues" evidence="5">
    <location>
        <begin position="12"/>
        <end position="24"/>
    </location>
</feature>
<feature type="compositionally biased region" description="Low complexity" evidence="5">
    <location>
        <begin position="25"/>
        <end position="42"/>
    </location>
</feature>
<feature type="modified residue" description="Phosphoserine" evidence="1">
    <location>
        <position position="11"/>
    </location>
</feature>
<feature type="modified residue" description="Phosphoserine" evidence="10">
    <location>
        <position position="45"/>
    </location>
</feature>
<feature type="modified residue" description="Phosphoserine" evidence="10">
    <location>
        <position position="54"/>
    </location>
</feature>
<feature type="modified residue" description="Phosphoserine" evidence="10">
    <location>
        <position position="56"/>
    </location>
</feature>
<feature type="modified residue" description="Phosphoserine" evidence="10">
    <location>
        <position position="60"/>
    </location>
</feature>
<feature type="sequence conflict" description="In Ref. 1; BAC32940." evidence="9" ref="1">
    <original>P</original>
    <variation>S</variation>
    <location>
        <position position="21"/>
    </location>
</feature>
<feature type="sequence conflict" description="In Ref. 1; BAB27676." evidence="9" ref="1">
    <original>E</original>
    <variation>K</variation>
    <location>
        <position position="288"/>
    </location>
</feature>
<name>TM163_MOUSE</name>
<protein>
    <recommendedName>
        <fullName>Transmembrane protein 163</fullName>
    </recommendedName>
    <alternativeName>
        <fullName>Synaptic vesicle membrane protein of 31 kDa</fullName>
    </alternativeName>
</protein>
<accession>Q8C996</accession>
<accession>Q8C8I2</accession>
<accession>Q9D0E0</accession>
<organism>
    <name type="scientific">Mus musculus</name>
    <name type="common">Mouse</name>
    <dbReference type="NCBI Taxonomy" id="10090"/>
    <lineage>
        <taxon>Eukaryota</taxon>
        <taxon>Metazoa</taxon>
        <taxon>Chordata</taxon>
        <taxon>Craniata</taxon>
        <taxon>Vertebrata</taxon>
        <taxon>Euteleostomi</taxon>
        <taxon>Mammalia</taxon>
        <taxon>Eutheria</taxon>
        <taxon>Euarchontoglires</taxon>
        <taxon>Glires</taxon>
        <taxon>Rodentia</taxon>
        <taxon>Myomorpha</taxon>
        <taxon>Muroidea</taxon>
        <taxon>Muridae</taxon>
        <taxon>Murinae</taxon>
        <taxon>Mus</taxon>
        <taxon>Mus</taxon>
    </lineage>
</organism>